<protein>
    <recommendedName>
        <fullName evidence="1">Enoyl-[acyl-carrier-protein] reductase [NADH]</fullName>
        <shortName evidence="1">ENR</shortName>
        <ecNumber evidence="1">1.3.1.9</ecNumber>
    </recommendedName>
</protein>
<dbReference type="EC" id="1.3.1.9" evidence="1"/>
<dbReference type="EMBL" id="CP000891">
    <property type="protein sequence ID" value="ABX48806.1"/>
    <property type="molecule type" value="Genomic_DNA"/>
</dbReference>
<dbReference type="RefSeq" id="WP_006085369.1">
    <property type="nucleotide sequence ID" value="NC_009997.1"/>
</dbReference>
<dbReference type="SMR" id="A9KWI3"/>
<dbReference type="GeneID" id="11771867"/>
<dbReference type="KEGG" id="sbn:Sbal195_1633"/>
<dbReference type="HOGENOM" id="CLU_057698_1_0_6"/>
<dbReference type="UniPathway" id="UPA00094"/>
<dbReference type="Proteomes" id="UP000000770">
    <property type="component" value="Chromosome"/>
</dbReference>
<dbReference type="GO" id="GO:0004318">
    <property type="term" value="F:enoyl-[acyl-carrier-protein] reductase (NADH) activity"/>
    <property type="evidence" value="ECO:0007669"/>
    <property type="project" value="UniProtKB-UniRule"/>
</dbReference>
<dbReference type="GO" id="GO:0051287">
    <property type="term" value="F:NAD binding"/>
    <property type="evidence" value="ECO:0007669"/>
    <property type="project" value="UniProtKB-UniRule"/>
</dbReference>
<dbReference type="GO" id="GO:0050343">
    <property type="term" value="F:trans-2-enoyl-CoA reductase (NADH) activity"/>
    <property type="evidence" value="ECO:0007669"/>
    <property type="project" value="TreeGrafter"/>
</dbReference>
<dbReference type="GO" id="GO:0006633">
    <property type="term" value="P:fatty acid biosynthetic process"/>
    <property type="evidence" value="ECO:0007669"/>
    <property type="project" value="UniProtKB-UniRule"/>
</dbReference>
<dbReference type="FunFam" id="3.40.50.720:FF:000221">
    <property type="entry name" value="Enoyl-[acyl-carrier-protein] reductase [NADH]"/>
    <property type="match status" value="1"/>
</dbReference>
<dbReference type="Gene3D" id="3.40.50.720">
    <property type="entry name" value="NAD(P)-binding Rossmann-like Domain"/>
    <property type="match status" value="1"/>
</dbReference>
<dbReference type="HAMAP" id="MF_01838">
    <property type="entry name" value="FabV_reductase"/>
    <property type="match status" value="1"/>
</dbReference>
<dbReference type="InterPro" id="IPR024906">
    <property type="entry name" value="Eno_Rdtase_FAD-bd_dom"/>
</dbReference>
<dbReference type="InterPro" id="IPR024910">
    <property type="entry name" value="Enoyl-CoA_Rdtase_cat_dom"/>
</dbReference>
<dbReference type="InterPro" id="IPR050048">
    <property type="entry name" value="FabV-like_NADH_b"/>
</dbReference>
<dbReference type="InterPro" id="IPR010758">
    <property type="entry name" value="Trans-2-enoyl-CoA_reductase"/>
</dbReference>
<dbReference type="NCBIfam" id="NF043048">
    <property type="entry name" value="EnoyACPredFabV"/>
    <property type="match status" value="1"/>
</dbReference>
<dbReference type="NCBIfam" id="NF010177">
    <property type="entry name" value="PRK13656.1"/>
    <property type="match status" value="1"/>
</dbReference>
<dbReference type="PANTHER" id="PTHR37480">
    <property type="entry name" value="ENOYL-[ACYL-CARRIER-PROTEIN] REDUCTASE [NADH]"/>
    <property type="match status" value="1"/>
</dbReference>
<dbReference type="PANTHER" id="PTHR37480:SF1">
    <property type="entry name" value="ENOYL-[ACYL-CARRIER-PROTEIN] REDUCTASE [NADH]"/>
    <property type="match status" value="1"/>
</dbReference>
<dbReference type="Pfam" id="PF07055">
    <property type="entry name" value="Eno-Rase_FAD_bd"/>
    <property type="match status" value="1"/>
</dbReference>
<dbReference type="Pfam" id="PF12242">
    <property type="entry name" value="Eno-Rase_NADH_b"/>
    <property type="match status" value="1"/>
</dbReference>
<dbReference type="Pfam" id="PF12241">
    <property type="entry name" value="Enoyl_reductase"/>
    <property type="match status" value="1"/>
</dbReference>
<sequence length="400" mass="44058">MIIKPKIRGFICTTTHPVGCEANVQEQITLTKAKGKIANGPKRVLVVGSSSGYGLSSRIAAAFGSDAATIGVFFEKPGTETKPGTAGWYNSAAFDKFAKAEGLYSKSINCDAFSHEAKQKVIELIKQDLGEIDMVVYSLASPVRKLPDSGELIRSALKPIGETYTATAVDTNKDCIIEATVEPATEQEIADTVTVMGGEDWELWIKALSEAGVLADNCKTVAYSYIGTELTWPIYWHGALGKAKMDLDRAAKALNEQLSATGGSANVAVLKSVVTQASSAIPVMPLYIAMVFKKMRQEGLHEGCMEQIYRMFSERLFRADGAKPETDSDNRIRLDDWELREDIQQHCRNLWPQVTTENLSELTDYREYKAEFIKLFGFGIEGIDYDADVNPYVEFDVIEL</sequence>
<feature type="chain" id="PRO_1000088456" description="Enoyl-[acyl-carrier-protein] reductase [NADH]">
    <location>
        <begin position="1"/>
        <end position="400"/>
    </location>
</feature>
<feature type="active site" description="Proton donor" evidence="1">
    <location>
        <position position="235"/>
    </location>
</feature>
<feature type="binding site" evidence="1">
    <location>
        <begin position="48"/>
        <end position="53"/>
    </location>
    <ligand>
        <name>NAD(+)</name>
        <dbReference type="ChEBI" id="CHEBI:57540"/>
    </ligand>
</feature>
<feature type="binding site" evidence="1">
    <location>
        <begin position="74"/>
        <end position="75"/>
    </location>
    <ligand>
        <name>NAD(+)</name>
        <dbReference type="ChEBI" id="CHEBI:57540"/>
    </ligand>
</feature>
<feature type="binding site" evidence="1">
    <location>
        <begin position="111"/>
        <end position="112"/>
    </location>
    <ligand>
        <name>NAD(+)</name>
        <dbReference type="ChEBI" id="CHEBI:57540"/>
    </ligand>
</feature>
<feature type="binding site" evidence="1">
    <location>
        <begin position="139"/>
        <end position="140"/>
    </location>
    <ligand>
        <name>NAD(+)</name>
        <dbReference type="ChEBI" id="CHEBI:57540"/>
    </ligand>
</feature>
<feature type="binding site" evidence="1">
    <location>
        <position position="225"/>
    </location>
    <ligand>
        <name>substrate</name>
    </ligand>
</feature>
<feature type="binding site" evidence="1">
    <location>
        <position position="244"/>
    </location>
    <ligand>
        <name>NAD(+)</name>
        <dbReference type="ChEBI" id="CHEBI:57540"/>
    </ligand>
</feature>
<feature type="binding site" evidence="1">
    <location>
        <begin position="273"/>
        <end position="275"/>
    </location>
    <ligand>
        <name>NAD(+)</name>
        <dbReference type="ChEBI" id="CHEBI:57540"/>
    </ligand>
</feature>
<feature type="site" description="Plays an important role in discriminating NADH against NADPH" evidence="1">
    <location>
        <position position="75"/>
    </location>
</feature>
<proteinExistence type="inferred from homology"/>
<accession>A9KWI3</accession>
<gene>
    <name evidence="1" type="primary">fabV</name>
    <name type="ordered locus">Sbal195_1633</name>
</gene>
<keyword id="KW-0275">Fatty acid biosynthesis</keyword>
<keyword id="KW-0276">Fatty acid metabolism</keyword>
<keyword id="KW-0444">Lipid biosynthesis</keyword>
<keyword id="KW-0443">Lipid metabolism</keyword>
<keyword id="KW-0520">NAD</keyword>
<keyword id="KW-0560">Oxidoreductase</keyword>
<name>FABV_SHEB9</name>
<comment type="function">
    <text evidence="1">Involved in the final reduction of the elongation cycle of fatty acid synthesis (FAS II). Catalyzes the reduction of a carbon-carbon double bond in an enoyl moiety that is covalently linked to an acyl carrier protein (ACP).</text>
</comment>
<comment type="catalytic activity">
    <reaction evidence="1">
        <text>a 2,3-saturated acyl-[ACP] + NAD(+) = a (2E)-enoyl-[ACP] + NADH + H(+)</text>
        <dbReference type="Rhea" id="RHEA:10240"/>
        <dbReference type="Rhea" id="RHEA-COMP:9925"/>
        <dbReference type="Rhea" id="RHEA-COMP:9926"/>
        <dbReference type="ChEBI" id="CHEBI:15378"/>
        <dbReference type="ChEBI" id="CHEBI:57540"/>
        <dbReference type="ChEBI" id="CHEBI:57945"/>
        <dbReference type="ChEBI" id="CHEBI:78784"/>
        <dbReference type="ChEBI" id="CHEBI:78785"/>
        <dbReference type="EC" id="1.3.1.9"/>
    </reaction>
</comment>
<comment type="pathway">
    <text evidence="1">Lipid metabolism; fatty acid biosynthesis.</text>
</comment>
<comment type="subunit">
    <text evidence="1">Monomer.</text>
</comment>
<comment type="similarity">
    <text evidence="1">Belongs to the TER reductase family.</text>
</comment>
<evidence type="ECO:0000255" key="1">
    <source>
        <dbReference type="HAMAP-Rule" id="MF_01838"/>
    </source>
</evidence>
<organism>
    <name type="scientific">Shewanella baltica (strain OS195)</name>
    <dbReference type="NCBI Taxonomy" id="399599"/>
    <lineage>
        <taxon>Bacteria</taxon>
        <taxon>Pseudomonadati</taxon>
        <taxon>Pseudomonadota</taxon>
        <taxon>Gammaproteobacteria</taxon>
        <taxon>Alteromonadales</taxon>
        <taxon>Shewanellaceae</taxon>
        <taxon>Shewanella</taxon>
    </lineage>
</organism>
<reference key="1">
    <citation type="submission" date="2007-11" db="EMBL/GenBank/DDBJ databases">
        <title>Complete sequence of chromosome of Shewanella baltica OS195.</title>
        <authorList>
            <consortium name="US DOE Joint Genome Institute"/>
            <person name="Copeland A."/>
            <person name="Lucas S."/>
            <person name="Lapidus A."/>
            <person name="Barry K."/>
            <person name="Glavina del Rio T."/>
            <person name="Dalin E."/>
            <person name="Tice H."/>
            <person name="Pitluck S."/>
            <person name="Chain P."/>
            <person name="Malfatti S."/>
            <person name="Shin M."/>
            <person name="Vergez L."/>
            <person name="Schmutz J."/>
            <person name="Larimer F."/>
            <person name="Land M."/>
            <person name="Hauser L."/>
            <person name="Kyrpides N."/>
            <person name="Kim E."/>
            <person name="Brettar I."/>
            <person name="Rodrigues J."/>
            <person name="Konstantinidis K."/>
            <person name="Klappenbach J."/>
            <person name="Hofle M."/>
            <person name="Tiedje J."/>
            <person name="Richardson P."/>
        </authorList>
    </citation>
    <scope>NUCLEOTIDE SEQUENCE [LARGE SCALE GENOMIC DNA]</scope>
    <source>
        <strain>OS195</strain>
    </source>
</reference>